<name>Y250_MYCTU</name>
<sequence>MSTTAELAELHDLVGGLRRCVTALKARFGDNPATRRIVIDADRILTDIELLDTDVSELDLERAAVPQPSEKIAIPDTEYDREFWRDVDDEGVGGHRY</sequence>
<protein>
    <recommendedName>
        <fullName>Uncharacterized protein Rv0250c</fullName>
    </recommendedName>
</protein>
<dbReference type="EMBL" id="AL123456">
    <property type="protein sequence ID" value="CCP42979.1"/>
    <property type="molecule type" value="Genomic_DNA"/>
</dbReference>
<dbReference type="PIR" id="F70939">
    <property type="entry name" value="F70939"/>
</dbReference>
<dbReference type="RefSeq" id="NP_214764.1">
    <property type="nucleotide sequence ID" value="NC_000962.3"/>
</dbReference>
<dbReference type="RefSeq" id="WP_003401329.1">
    <property type="nucleotide sequence ID" value="NZ_NVQJ01000001.1"/>
</dbReference>
<dbReference type="SMR" id="O53672"/>
<dbReference type="STRING" id="83332.Rv0250c"/>
<dbReference type="iPTMnet" id="O53672"/>
<dbReference type="PaxDb" id="83332-Rv0250c"/>
<dbReference type="DNASU" id="886669"/>
<dbReference type="GeneID" id="886669"/>
<dbReference type="KEGG" id="mtu:Rv0250c"/>
<dbReference type="KEGG" id="mtv:RVBD_0250c"/>
<dbReference type="TubercuList" id="Rv0250c"/>
<dbReference type="eggNOG" id="ENOG503301T">
    <property type="taxonomic scope" value="Bacteria"/>
</dbReference>
<dbReference type="InParanoid" id="O53672"/>
<dbReference type="OrthoDB" id="5194954at2"/>
<dbReference type="PhylomeDB" id="O53672"/>
<dbReference type="Proteomes" id="UP000001584">
    <property type="component" value="Chromosome"/>
</dbReference>
<reference key="1">
    <citation type="journal article" date="1998" name="Nature">
        <title>Deciphering the biology of Mycobacterium tuberculosis from the complete genome sequence.</title>
        <authorList>
            <person name="Cole S.T."/>
            <person name="Brosch R."/>
            <person name="Parkhill J."/>
            <person name="Garnier T."/>
            <person name="Churcher C.M."/>
            <person name="Harris D.E."/>
            <person name="Gordon S.V."/>
            <person name="Eiglmeier K."/>
            <person name="Gas S."/>
            <person name="Barry C.E. III"/>
            <person name="Tekaia F."/>
            <person name="Badcock K."/>
            <person name="Basham D."/>
            <person name="Brown D."/>
            <person name="Chillingworth T."/>
            <person name="Connor R."/>
            <person name="Davies R.M."/>
            <person name="Devlin K."/>
            <person name="Feltwell T."/>
            <person name="Gentles S."/>
            <person name="Hamlin N."/>
            <person name="Holroyd S."/>
            <person name="Hornsby T."/>
            <person name="Jagels K."/>
            <person name="Krogh A."/>
            <person name="McLean J."/>
            <person name="Moule S."/>
            <person name="Murphy L.D."/>
            <person name="Oliver S."/>
            <person name="Osborne J."/>
            <person name="Quail M.A."/>
            <person name="Rajandream M.A."/>
            <person name="Rogers J."/>
            <person name="Rutter S."/>
            <person name="Seeger K."/>
            <person name="Skelton S."/>
            <person name="Squares S."/>
            <person name="Squares R."/>
            <person name="Sulston J.E."/>
            <person name="Taylor K."/>
            <person name="Whitehead S."/>
            <person name="Barrell B.G."/>
        </authorList>
    </citation>
    <scope>NUCLEOTIDE SEQUENCE [LARGE SCALE GENOMIC DNA]</scope>
    <source>
        <strain>ATCC 25618 / H37Rv</strain>
    </source>
</reference>
<reference key="2">
    <citation type="journal article" date="2007" name="Microbiology">
        <title>Experimental determination of translational starts using peptide mass mapping and tandem mass spectrometry within the proteome of Mycobacterium tuberculosis.</title>
        <authorList>
            <person name="Rison S.C."/>
            <person name="Mattow J."/>
            <person name="Jungblut P.R."/>
            <person name="Stoker N.G."/>
        </authorList>
    </citation>
    <scope>IDENTIFICATION BY MASS SPECTROMETRY</scope>
    <scope>DETERMINATION OF TRANSLATIONAL START SITE</scope>
    <scope>CLEAVAGE OF INITIATOR METHIONINE</scope>
    <source>
        <strain>ATCC 25618 / H37Rv</strain>
    </source>
</reference>
<reference key="3">
    <citation type="journal article" date="2011" name="Mol. Cell. Proteomics">
        <title>Proteogenomic analysis of Mycobacterium tuberculosis by high resolution mass spectrometry.</title>
        <authorList>
            <person name="Kelkar D.S."/>
            <person name="Kumar D."/>
            <person name="Kumar P."/>
            <person name="Balakrishnan L."/>
            <person name="Muthusamy B."/>
            <person name="Yadav A.K."/>
            <person name="Shrivastava P."/>
            <person name="Marimuthu A."/>
            <person name="Anand S."/>
            <person name="Sundaram H."/>
            <person name="Kingsbury R."/>
            <person name="Harsha H.C."/>
            <person name="Nair B."/>
            <person name="Prasad T.S."/>
            <person name="Chauhan D.S."/>
            <person name="Katoch K."/>
            <person name="Katoch V.M."/>
            <person name="Kumar P."/>
            <person name="Chaerkady R."/>
            <person name="Ramachandran S."/>
            <person name="Dash D."/>
            <person name="Pandey A."/>
        </authorList>
    </citation>
    <scope>ACETYLATION [LARGE SCALE ANALYSIS] AT SER-2</scope>
    <scope>CLEAVAGE OF INITIATOR METHIONINE [LARGE SCALE ANALYSIS]</scope>
    <scope>IDENTIFICATION BY MASS SPECTROMETRY [LARGE SCALE ANALYSIS]</scope>
    <source>
        <strain>ATCC 25618 / H37Rv</strain>
    </source>
</reference>
<keyword id="KW-0007">Acetylation</keyword>
<keyword id="KW-1185">Reference proteome</keyword>
<proteinExistence type="evidence at protein level"/>
<gene>
    <name type="ordered locus">Rv0250c</name>
</gene>
<organism>
    <name type="scientific">Mycobacterium tuberculosis (strain ATCC 25618 / H37Rv)</name>
    <dbReference type="NCBI Taxonomy" id="83332"/>
    <lineage>
        <taxon>Bacteria</taxon>
        <taxon>Bacillati</taxon>
        <taxon>Actinomycetota</taxon>
        <taxon>Actinomycetes</taxon>
        <taxon>Mycobacteriales</taxon>
        <taxon>Mycobacteriaceae</taxon>
        <taxon>Mycobacterium</taxon>
        <taxon>Mycobacterium tuberculosis complex</taxon>
    </lineage>
</organism>
<feature type="initiator methionine" description="Removed" evidence="1 2">
    <location>
        <position position="1"/>
    </location>
</feature>
<feature type="chain" id="PRO_0000403670" description="Uncharacterized protein Rv0250c">
    <location>
        <begin position="2"/>
        <end position="97"/>
    </location>
</feature>
<feature type="modified residue" description="N-acetylserine" evidence="2">
    <location>
        <position position="2"/>
    </location>
</feature>
<accession>O53672</accession>
<accession>L0T2Y7</accession>
<evidence type="ECO:0000269" key="1">
    <source>
    </source>
</evidence>
<evidence type="ECO:0007744" key="2">
    <source>
    </source>
</evidence>